<sequence>MTLKIHDTLTREKRDFVPADPQRVTMYVCGPTVYNYAHIGNFRPVVVFDVLFRVLRHLYGEDAVVYARNVTDVDDKINQKAADEGVPISVITDRYLAAYHQDADALGALRPTLEPKATEHIGAILEMIGQLVENGSAYAAEGHVLFDTQSFADYGQLSGRPLDEMIAGARVEVAPYKRHPADFVLWKPSKENEPEWESPWGAGRPGWHIECSAMIDKALGQTIDIHAGGIDLTFPHHENEVAQSRCAHKTSVLANYWMHNGFLDMSGEKMSKSLGNVIIPHELLETTPGEVIRWALLSAHYRQPLDWTPELLEQSKKSLDRLYGALRRAKDVAPDQAMEAPAEVMSALMDDLNTPLATSAFFEVSSAIEKAVTAGDTVAIAANKARLLEAGALLGFLQADPDAWFEGDASDELKAQVEDLLAKRVAARAAKDWSAADAIRGELDALGVVVMDGPAGATWRMKD</sequence>
<organism>
    <name type="scientific">Caulobacter vibrioides (strain ATCC 19089 / CIP 103742 / CB 15)</name>
    <name type="common">Caulobacter crescentus</name>
    <dbReference type="NCBI Taxonomy" id="190650"/>
    <lineage>
        <taxon>Bacteria</taxon>
        <taxon>Pseudomonadati</taxon>
        <taxon>Pseudomonadota</taxon>
        <taxon>Alphaproteobacteria</taxon>
        <taxon>Caulobacterales</taxon>
        <taxon>Caulobacteraceae</taxon>
        <taxon>Caulobacter</taxon>
    </lineage>
</organism>
<protein>
    <recommendedName>
        <fullName evidence="1">Cysteine--tRNA ligase</fullName>
        <ecNumber evidence="1">6.1.1.16</ecNumber>
    </recommendedName>
    <alternativeName>
        <fullName evidence="1">Cysteinyl-tRNA synthetase</fullName>
        <shortName evidence="1">CysRS</shortName>
    </alternativeName>
</protein>
<name>SYC_CAUVC</name>
<comment type="catalytic activity">
    <reaction evidence="1">
        <text>tRNA(Cys) + L-cysteine + ATP = L-cysteinyl-tRNA(Cys) + AMP + diphosphate</text>
        <dbReference type="Rhea" id="RHEA:17773"/>
        <dbReference type="Rhea" id="RHEA-COMP:9661"/>
        <dbReference type="Rhea" id="RHEA-COMP:9679"/>
        <dbReference type="ChEBI" id="CHEBI:30616"/>
        <dbReference type="ChEBI" id="CHEBI:33019"/>
        <dbReference type="ChEBI" id="CHEBI:35235"/>
        <dbReference type="ChEBI" id="CHEBI:78442"/>
        <dbReference type="ChEBI" id="CHEBI:78517"/>
        <dbReference type="ChEBI" id="CHEBI:456215"/>
        <dbReference type="EC" id="6.1.1.16"/>
    </reaction>
</comment>
<comment type="cofactor">
    <cofactor evidence="1">
        <name>Zn(2+)</name>
        <dbReference type="ChEBI" id="CHEBI:29105"/>
    </cofactor>
    <text evidence="1">Binds 1 zinc ion per subunit.</text>
</comment>
<comment type="subunit">
    <text evidence="1">Monomer.</text>
</comment>
<comment type="subcellular location">
    <subcellularLocation>
        <location evidence="1">Cytoplasm</location>
    </subcellularLocation>
</comment>
<comment type="similarity">
    <text evidence="1">Belongs to the class-I aminoacyl-tRNA synthetase family.</text>
</comment>
<reference key="1">
    <citation type="journal article" date="2001" name="Proc. Natl. Acad. Sci. U.S.A.">
        <title>Complete genome sequence of Caulobacter crescentus.</title>
        <authorList>
            <person name="Nierman W.C."/>
            <person name="Feldblyum T.V."/>
            <person name="Laub M.T."/>
            <person name="Paulsen I.T."/>
            <person name="Nelson K.E."/>
            <person name="Eisen J.A."/>
            <person name="Heidelberg J.F."/>
            <person name="Alley M.R.K."/>
            <person name="Ohta N."/>
            <person name="Maddock J.R."/>
            <person name="Potocka I."/>
            <person name="Nelson W.C."/>
            <person name="Newton A."/>
            <person name="Stephens C."/>
            <person name="Phadke N.D."/>
            <person name="Ely B."/>
            <person name="DeBoy R.T."/>
            <person name="Dodson R.J."/>
            <person name="Durkin A.S."/>
            <person name="Gwinn M.L."/>
            <person name="Haft D.H."/>
            <person name="Kolonay J.F."/>
            <person name="Smit J."/>
            <person name="Craven M.B."/>
            <person name="Khouri H.M."/>
            <person name="Shetty J."/>
            <person name="Berry K.J."/>
            <person name="Utterback T.R."/>
            <person name="Tran K."/>
            <person name="Wolf A.M."/>
            <person name="Vamathevan J.J."/>
            <person name="Ermolaeva M.D."/>
            <person name="White O."/>
            <person name="Salzberg S.L."/>
            <person name="Venter J.C."/>
            <person name="Shapiro L."/>
            <person name="Fraser C.M."/>
        </authorList>
    </citation>
    <scope>NUCLEOTIDE SEQUENCE [LARGE SCALE GENOMIC DNA]</scope>
    <source>
        <strain>ATCC 19089 / CIP 103742 / CB 15</strain>
    </source>
</reference>
<accession>Q9AAY2</accession>
<evidence type="ECO:0000255" key="1">
    <source>
        <dbReference type="HAMAP-Rule" id="MF_00041"/>
    </source>
</evidence>
<proteinExistence type="inferred from homology"/>
<keyword id="KW-0030">Aminoacyl-tRNA synthetase</keyword>
<keyword id="KW-0067">ATP-binding</keyword>
<keyword id="KW-0963">Cytoplasm</keyword>
<keyword id="KW-0436">Ligase</keyword>
<keyword id="KW-0479">Metal-binding</keyword>
<keyword id="KW-0547">Nucleotide-binding</keyword>
<keyword id="KW-0648">Protein biosynthesis</keyword>
<keyword id="KW-1185">Reference proteome</keyword>
<keyword id="KW-0862">Zinc</keyword>
<dbReference type="EC" id="6.1.1.16" evidence="1"/>
<dbReference type="EMBL" id="AE005673">
    <property type="protein sequence ID" value="AAK22447.1"/>
    <property type="molecule type" value="Genomic_DNA"/>
</dbReference>
<dbReference type="PIR" id="C87306">
    <property type="entry name" value="C87306"/>
</dbReference>
<dbReference type="RefSeq" id="NP_419279.1">
    <property type="nucleotide sequence ID" value="NC_002696.2"/>
</dbReference>
<dbReference type="RefSeq" id="WP_010918348.1">
    <property type="nucleotide sequence ID" value="NC_002696.2"/>
</dbReference>
<dbReference type="SMR" id="Q9AAY2"/>
<dbReference type="STRING" id="190650.CC_0460"/>
<dbReference type="EnsemblBacteria" id="AAK22447">
    <property type="protein sequence ID" value="AAK22447"/>
    <property type="gene ID" value="CC_0460"/>
</dbReference>
<dbReference type="KEGG" id="ccr:CC_0460"/>
<dbReference type="PATRIC" id="fig|190650.5.peg.466"/>
<dbReference type="eggNOG" id="COG0215">
    <property type="taxonomic scope" value="Bacteria"/>
</dbReference>
<dbReference type="HOGENOM" id="CLU_013528_0_1_5"/>
<dbReference type="BioCyc" id="CAULO:CC0460-MONOMER"/>
<dbReference type="Proteomes" id="UP000001816">
    <property type="component" value="Chromosome"/>
</dbReference>
<dbReference type="GO" id="GO:0005829">
    <property type="term" value="C:cytosol"/>
    <property type="evidence" value="ECO:0007669"/>
    <property type="project" value="TreeGrafter"/>
</dbReference>
<dbReference type="GO" id="GO:0005524">
    <property type="term" value="F:ATP binding"/>
    <property type="evidence" value="ECO:0007669"/>
    <property type="project" value="UniProtKB-UniRule"/>
</dbReference>
<dbReference type="GO" id="GO:0004817">
    <property type="term" value="F:cysteine-tRNA ligase activity"/>
    <property type="evidence" value="ECO:0007669"/>
    <property type="project" value="UniProtKB-UniRule"/>
</dbReference>
<dbReference type="GO" id="GO:0008270">
    <property type="term" value="F:zinc ion binding"/>
    <property type="evidence" value="ECO:0007669"/>
    <property type="project" value="UniProtKB-UniRule"/>
</dbReference>
<dbReference type="GO" id="GO:0006423">
    <property type="term" value="P:cysteinyl-tRNA aminoacylation"/>
    <property type="evidence" value="ECO:0007669"/>
    <property type="project" value="UniProtKB-UniRule"/>
</dbReference>
<dbReference type="CDD" id="cd00672">
    <property type="entry name" value="CysRS_core"/>
    <property type="match status" value="1"/>
</dbReference>
<dbReference type="FunFam" id="3.40.50.620:FF:000068">
    <property type="entry name" value="Cysteine--tRNA ligase"/>
    <property type="match status" value="1"/>
</dbReference>
<dbReference type="Gene3D" id="1.20.120.1910">
    <property type="entry name" value="Cysteine-tRNA ligase, C-terminal anti-codon recognition domain"/>
    <property type="match status" value="1"/>
</dbReference>
<dbReference type="Gene3D" id="3.40.50.620">
    <property type="entry name" value="HUPs"/>
    <property type="match status" value="1"/>
</dbReference>
<dbReference type="HAMAP" id="MF_00041">
    <property type="entry name" value="Cys_tRNA_synth"/>
    <property type="match status" value="1"/>
</dbReference>
<dbReference type="InterPro" id="IPR015803">
    <property type="entry name" value="Cys-tRNA-ligase"/>
</dbReference>
<dbReference type="InterPro" id="IPR015273">
    <property type="entry name" value="Cys-tRNA-synt_Ia_DALR"/>
</dbReference>
<dbReference type="InterPro" id="IPR024909">
    <property type="entry name" value="Cys-tRNA/MSH_ligase"/>
</dbReference>
<dbReference type="InterPro" id="IPR056411">
    <property type="entry name" value="CysS_C"/>
</dbReference>
<dbReference type="InterPro" id="IPR014729">
    <property type="entry name" value="Rossmann-like_a/b/a_fold"/>
</dbReference>
<dbReference type="InterPro" id="IPR032678">
    <property type="entry name" value="tRNA-synt_1_cat_dom"/>
</dbReference>
<dbReference type="InterPro" id="IPR009080">
    <property type="entry name" value="tRNAsynth_Ia_anticodon-bd"/>
</dbReference>
<dbReference type="NCBIfam" id="TIGR00435">
    <property type="entry name" value="cysS"/>
    <property type="match status" value="1"/>
</dbReference>
<dbReference type="PANTHER" id="PTHR10890:SF3">
    <property type="entry name" value="CYSTEINE--TRNA LIGASE, CYTOPLASMIC"/>
    <property type="match status" value="1"/>
</dbReference>
<dbReference type="PANTHER" id="PTHR10890">
    <property type="entry name" value="CYSTEINYL-TRNA SYNTHETASE"/>
    <property type="match status" value="1"/>
</dbReference>
<dbReference type="Pfam" id="PF23493">
    <property type="entry name" value="CysS_C"/>
    <property type="match status" value="1"/>
</dbReference>
<dbReference type="Pfam" id="PF09190">
    <property type="entry name" value="DALR_2"/>
    <property type="match status" value="1"/>
</dbReference>
<dbReference type="Pfam" id="PF01406">
    <property type="entry name" value="tRNA-synt_1e"/>
    <property type="match status" value="1"/>
</dbReference>
<dbReference type="PRINTS" id="PR00983">
    <property type="entry name" value="TRNASYNTHCYS"/>
</dbReference>
<dbReference type="SMART" id="SM00840">
    <property type="entry name" value="DALR_2"/>
    <property type="match status" value="1"/>
</dbReference>
<dbReference type="SUPFAM" id="SSF47323">
    <property type="entry name" value="Anticodon-binding domain of a subclass of class I aminoacyl-tRNA synthetases"/>
    <property type="match status" value="1"/>
</dbReference>
<dbReference type="SUPFAM" id="SSF52374">
    <property type="entry name" value="Nucleotidylyl transferase"/>
    <property type="match status" value="1"/>
</dbReference>
<feature type="chain" id="PRO_0000159374" description="Cysteine--tRNA ligase">
    <location>
        <begin position="1"/>
        <end position="463"/>
    </location>
</feature>
<feature type="short sequence motif" description="'HIGH' region">
    <location>
        <begin position="31"/>
        <end position="41"/>
    </location>
</feature>
<feature type="short sequence motif" description="'KMSKS' region">
    <location>
        <begin position="269"/>
        <end position="273"/>
    </location>
</feature>
<feature type="binding site" evidence="1">
    <location>
        <position position="29"/>
    </location>
    <ligand>
        <name>Zn(2+)</name>
        <dbReference type="ChEBI" id="CHEBI:29105"/>
    </ligand>
</feature>
<feature type="binding site" evidence="1">
    <location>
        <position position="211"/>
    </location>
    <ligand>
        <name>Zn(2+)</name>
        <dbReference type="ChEBI" id="CHEBI:29105"/>
    </ligand>
</feature>
<feature type="binding site" evidence="1">
    <location>
        <position position="236"/>
    </location>
    <ligand>
        <name>Zn(2+)</name>
        <dbReference type="ChEBI" id="CHEBI:29105"/>
    </ligand>
</feature>
<feature type="binding site" evidence="1">
    <location>
        <position position="240"/>
    </location>
    <ligand>
        <name>Zn(2+)</name>
        <dbReference type="ChEBI" id="CHEBI:29105"/>
    </ligand>
</feature>
<feature type="binding site" evidence="1">
    <location>
        <position position="272"/>
    </location>
    <ligand>
        <name>ATP</name>
        <dbReference type="ChEBI" id="CHEBI:30616"/>
    </ligand>
</feature>
<gene>
    <name evidence="1" type="primary">cysS</name>
    <name type="ordered locus">CC_0460</name>
</gene>